<keyword id="KW-0002">3D-structure</keyword>
<keyword id="KW-1035">Host cytoplasm</keyword>
<keyword id="KW-1040">Host Golgi apparatus</keyword>
<keyword id="KW-1048">Host nucleus</keyword>
<keyword id="KW-0945">Host-virus interaction</keyword>
<keyword id="KW-0378">Hydrolase</keyword>
<keyword id="KW-1090">Inhibition of host innate immune response by virus</keyword>
<keyword id="KW-1088">Inhibition of host RIG-I by virus</keyword>
<keyword id="KW-1113">Inhibition of host RLR pathway by virus</keyword>
<keyword id="KW-1185">Reference proteome</keyword>
<keyword id="KW-0899">Viral immunoevasion</keyword>
<keyword id="KW-0946">Virion</keyword>
<keyword id="KW-0920">Virion tegument</keyword>
<comment type="function">
    <text evidence="1 5 7 8 9 10 11">Plays an essential role in cytoplasmic secondary envelopment during viral egress. Interacts with the capsid via the large tegument protein/LTP and participates in its transport to the host trans-Golgi network (TGN) where secondary envelopment occurs. Modulates tegumentation and capsid accumulation at the viral assembly complex (By similarity). Plays a role in microtubule-based retrograde axonal transport to promote neuroinvasion (PubMed:29216315). Also plays a role in the inhibition of host immune response by acting as a viral deamidase (PubMed:27866900). Deamidates host RIGI on two asparagines which becomes unable to sense viral dsRNA. In turn, its ability to trigger antiviral immune response and restrict viral replication is inhibited (PubMed:27866900). Also deamidates a critical asparagine on host CGAS which abolishes cGAMP synthesis and downstream innate immune activation (PubMed:30092200).</text>
</comment>
<comment type="catalytic activity">
    <reaction evidence="9 11">
        <text>L-asparaginyl-[protein] + H2O = L-aspartyl-[protein] + NH4(+)</text>
        <dbReference type="Rhea" id="RHEA:57416"/>
        <dbReference type="Rhea" id="RHEA-COMP:9867"/>
        <dbReference type="Rhea" id="RHEA-COMP:12804"/>
        <dbReference type="ChEBI" id="CHEBI:15377"/>
        <dbReference type="ChEBI" id="CHEBI:28938"/>
        <dbReference type="ChEBI" id="CHEBI:29961"/>
        <dbReference type="ChEBI" id="CHEBI:50347"/>
    </reaction>
</comment>
<comment type="catalytic activity">
    <reaction evidence="11">
        <text>L-glutaminyl-[protein] + H2O = L-glutamyl-[protein] + NH4(+)</text>
        <dbReference type="Rhea" id="RHEA:16441"/>
        <dbReference type="Rhea" id="RHEA-COMP:10207"/>
        <dbReference type="Rhea" id="RHEA-COMP:10208"/>
        <dbReference type="ChEBI" id="CHEBI:15377"/>
        <dbReference type="ChEBI" id="CHEBI:28938"/>
        <dbReference type="ChEBI" id="CHEBI:29973"/>
        <dbReference type="ChEBI" id="CHEBI:30011"/>
        <dbReference type="EC" id="3.5.1.44"/>
    </reaction>
</comment>
<comment type="subunit">
    <text evidence="1 4 6 7 8 9 11">Interacts (via C-terminus) with the large tegument protein/LTP (via N-terminus) (PubMed:18787001, PubMed:24725933). Interacts with host DST (PubMed:23269794). Interacts with host RIGI; this interaction inhibits RIGI activation (PubMed:27866900). Interacts with host CGAS; this interaction inhibits host CGAS activation (PubMed:30092200). Interacts with host TAOK3 (PubMed:22202175).</text>
</comment>
<comment type="interaction">
    <interactant intactId="EBI-6880600">
        <id>P10221</id>
    </interactant>
    <interactant intactId="EBI-7694334">
        <id>P10220</id>
        <label>UL36</label>
    </interactant>
    <organismsDiffer>false</organismsDiffer>
    <experiments>2</experiments>
</comment>
<comment type="interaction">
    <interactant intactId="EBI-6880600">
        <id>P10221</id>
    </interactant>
    <interactant intactId="EBI-6880600">
        <id>P10221</id>
        <label>UL37</label>
    </interactant>
    <organismsDiffer>false</organismsDiffer>
    <experiments>2</experiments>
</comment>
<comment type="interaction">
    <interactant intactId="EBI-6880600">
        <id>P10221</id>
    </interactant>
    <interactant intactId="EBI-359276">
        <id>Q9Y4K3</id>
        <label>TRAF6</label>
    </interactant>
    <organismsDiffer>true</organismsDiffer>
    <experiments>3</experiments>
</comment>
<comment type="subcellular location">
    <subcellularLocation>
        <location evidence="1 12">Virion tegument</location>
    </subcellularLocation>
    <subcellularLocation>
        <location evidence="1 5 12">Host cytoplasm</location>
    </subcellularLocation>
    <subcellularLocation>
        <location evidence="1 3 12">Host nucleus</location>
    </subcellularLocation>
    <subcellularLocation>
        <location evidence="1 5">Host Golgi apparatus</location>
        <location evidence="1 5">Host trans-Golgi network</location>
    </subcellularLocation>
</comment>
<comment type="similarity">
    <text evidence="1">Belongs to the herpesviridae inner tegument protein family.</text>
</comment>
<organismHost>
    <name type="scientific">Homo sapiens</name>
    <name type="common">Human</name>
    <dbReference type="NCBI Taxonomy" id="9606"/>
</organismHost>
<gene>
    <name type="primary">UL37</name>
</gene>
<evidence type="ECO:0000255" key="1">
    <source>
        <dbReference type="HAMAP-Rule" id="MF_04043"/>
    </source>
</evidence>
<evidence type="ECO:0000256" key="2">
    <source>
        <dbReference type="SAM" id="MobiDB-lite"/>
    </source>
</evidence>
<evidence type="ECO:0000269" key="3">
    <source>
    </source>
</evidence>
<evidence type="ECO:0000269" key="4">
    <source>
    </source>
</evidence>
<evidence type="ECO:0000269" key="5">
    <source>
    </source>
</evidence>
<evidence type="ECO:0000269" key="6">
    <source>
    </source>
</evidence>
<evidence type="ECO:0000269" key="7">
    <source>
    </source>
</evidence>
<evidence type="ECO:0000269" key="8">
    <source>
    </source>
</evidence>
<evidence type="ECO:0000269" key="9">
    <source>
    </source>
</evidence>
<evidence type="ECO:0000269" key="10">
    <source>
    </source>
</evidence>
<evidence type="ECO:0000269" key="11">
    <source>
    </source>
</evidence>
<evidence type="ECO:0000269" key="12">
    <source>
    </source>
</evidence>
<feature type="chain" id="PRO_0000116044" description="Inner tegument protein">
    <location>
        <begin position="1"/>
        <end position="1123"/>
    </location>
</feature>
<feature type="region of interest" description="Disordered" evidence="2">
    <location>
        <begin position="1"/>
        <end position="27"/>
    </location>
</feature>
<feature type="region of interest" description="Interaction with large tegument protein" evidence="1">
    <location>
        <begin position="568"/>
        <end position="1123"/>
    </location>
</feature>
<feature type="region of interest" description="Disordered" evidence="2">
    <location>
        <begin position="1047"/>
        <end position="1123"/>
    </location>
</feature>
<feature type="mutagenesis site" description="Complete loss of deamidase activity." evidence="9 11">
    <original>C</original>
    <variation>S</variation>
    <location>
        <position position="819"/>
    </location>
</feature>
<feature type="mutagenesis site" description="Complete loss of deamidase activity." evidence="9">
    <original>C</original>
    <variation>S</variation>
    <location>
        <position position="850"/>
    </location>
</feature>
<sequence length="1123" mass="120556">MADRGLPSEAPVVTTSPAGPPSDGPMQRLLASLAGLRQPPTPTAETANGADDPAFLATAKLRAAMAAFLLSGTAIAPADARDCWRPLLEHLCALHRAHGLPETALLAENLPGLLVHRLVVALPEAPDQAFREMEVIKDTILAVTGSDTSHALDSAGLRTAAALGPVRVRQCAVEWIDRWQTVTKSCLAMSPRTSIEALGETSLKMAPVPLGQPSANLTTPAYSLLFPAPFVQEGLRFLALVSNRVTLFSAHLQRIDDATLTPLTRALFTLALVDEYLTTPERGAVVPPPLLAQFQHTVREIDPAIMIPPLEANKMVRSREEVRVSTALSRVSPRSACAPPGTLMARVRTDVAVFDPDVPFLSSSALAVFQPAVSSLLQLGEQPSAGAQQRLLALLQQTWTLIQNTNSPSVVINTLIDAGFTPSHCTHYLSALEGFLAAGVPARTPTGHGLGEVQQLFGCIALAGSNVFGLAREYGYYANYVKTFRRVQGASEHTHGRLCEAVGLSGGVLSQTLARIMGPAVPTEHLASLRRALVGEFETAERRFSSGQPSLLRETALIWIDVYGQTHWDITPTTPATPLSALLPVGQPSHAPSVHLAAATQIRFPALEGIHPNVLADPGFVPYVLALVVGDALRATCSAAYLPRPVEFALRVLAWARDFGLGYLPTVEGHRTKLGALITLLEPAARGGLGPTMQMADNIEQLLRELYVISRGAVEQLRPLVQLQPPPPPEVGTSLLLISMYALAARGVLQDLAERADPLIRQLEDAIVLLRLHMRTLSAFFECRFESDGRRLYAVVGDTPDRLGPWPPEAMGDAVSQYCSMYHDAKRALVASLASLRSVITETTAHLGVCDELAAQVSHEDNVLAVVRREIHGFLSVVSGIHARASKLLSGDQVPGFCFMGQFLARWRRLSACYQAARAAAGPEPVAEFVQELHDTWKGLQTERAVVVAPLVSSADQRAAAIREVMAHAPEDAPPQSPAADRVVLTSRRDLGAWGDYSLGPLGQTTAVPDSVDLSRQGLAVTLSMDWLLMNELLRVTDGVFRASAFRPLAGPESPRDLEVRDAGNSLPAPMPMDAQKPEAYGHGPRQADREGAPHSNTPVEDDEMIPEDTVAPPTDLPLTSYQ</sequence>
<reference key="1">
    <citation type="journal article" date="1988" name="J. Gen. Virol.">
        <title>The complete DNA sequence of the long unique region in the genome of herpes simplex virus type 1.</title>
        <authorList>
            <person name="McGeoch D.J."/>
            <person name="Dalrymple M.A."/>
            <person name="Davison A.J."/>
            <person name="Dolan A."/>
            <person name="Frame M.C."/>
            <person name="McNab D."/>
            <person name="Perry L.J."/>
            <person name="Scott J.E."/>
            <person name="Taylor P."/>
        </authorList>
    </citation>
    <scope>NUCLEOTIDE SEQUENCE [GENOMIC DNA]</scope>
</reference>
<reference key="2">
    <citation type="journal article" date="1995" name="Virology">
        <title>The UL37 protein of herpes simplex virus type 1 is associated with the tegument of purified virions.</title>
        <authorList>
            <person name="Schmitz J.B."/>
            <person name="Albright A.G."/>
            <person name="Kinchington P.R."/>
            <person name="Jenkins F.J."/>
        </authorList>
    </citation>
    <scope>SUBCELLULAR LOCATION</scope>
</reference>
<reference key="3">
    <citation type="journal article" date="2007" name="Virology">
        <title>Herpes simplex virus type 1 tegument proteins VP1/2 and UL37 are associated with intranuclear capsids.</title>
        <authorList>
            <person name="Bucks M.A."/>
            <person name="O'Regan K.J."/>
            <person name="Murphy M.A."/>
            <person name="Wills J.W."/>
            <person name="Courtney R.J."/>
        </authorList>
    </citation>
    <scope>SUBCELLULAR LOCATION</scope>
</reference>
<reference key="4">
    <citation type="journal article" date="2008" name="J. Virol.">
        <title>Localization of herpes simplex virus type 1 UL37 in the Golgi complex requires UL36 but not capsid structures.</title>
        <authorList>
            <person name="Desai P."/>
            <person name="Sexton G.L."/>
            <person name="Huang E."/>
            <person name="Person S."/>
        </authorList>
    </citation>
    <scope>INTERACTION WITH THE LARGE TEGUMENT PROTEIN</scope>
    <source>
        <strain>KOS</strain>
    </source>
</reference>
<reference key="5">
    <citation type="journal article" date="2010" name="J. Gen. Virol.">
        <title>Inner tegument protein pUL37 of herpes simplex virus type 1 is involved in directing capsids to the trans-Golgi network for envelopment.</title>
        <authorList>
            <person name="Pasdeloup D."/>
            <person name="Beilstein F."/>
            <person name="Roberts A.P."/>
            <person name="McElwee M."/>
            <person name="McNab D."/>
            <person name="Rixon F.J."/>
        </authorList>
    </citation>
    <scope>FUNCTION</scope>
    <scope>SUBCELLULAR LOCATION</scope>
</reference>
<reference key="6">
    <citation type="journal article" date="2012" name="Biochem. Biophys. Res. Commun.">
        <title>Identification of host cell proteins which interact with herpes simplex virus type 1 tegument protein pUL37.</title>
        <authorList>
            <person name="Kelly B.J."/>
            <person name="Diefenbach E."/>
            <person name="Fraefel C."/>
            <person name="Diefenbach R.J."/>
        </authorList>
    </citation>
    <scope>INTERACTION WITH HOST TAOK3</scope>
</reference>
<reference key="7">
    <citation type="journal article" date="2013" name="J. Virol.">
        <title>Herpesvirus tegument protein pUL37 interacts with dystonin/BPAG1 to promote capsid transport on microtubules during egress.</title>
        <authorList>
            <person name="Pasdeloup D."/>
            <person name="McElwee M."/>
            <person name="Beilstein F."/>
            <person name="Labetoulle M."/>
            <person name="Rixon F.J."/>
        </authorList>
    </citation>
    <scope>FUNCTION</scope>
    <scope>INTERACTION WITH HOST DST</scope>
</reference>
<reference key="8">
    <citation type="journal article" date="2014" name="Virology">
        <title>The interaction of the HSV-1 tegument proteins pUL36 and pUL37 is essential for secondary envelopment during viral egress.</title>
        <authorList>
            <person name="Kelly B.J."/>
            <person name="Bauerfeind R."/>
            <person name="Binz A."/>
            <person name="Sodeik B."/>
            <person name="Laimbacher A.S."/>
            <person name="Fraefel C."/>
            <person name="Diefenbach R.J."/>
        </authorList>
    </citation>
    <scope>FUNCTION</scope>
    <scope>INTERACTION WITH LARGE TEGUMENT PROTEIN</scope>
</reference>
<reference key="9">
    <citation type="journal article" date="2016" name="Cell Host Microbe">
        <title>A Viral Deamidase Targets the Helicase Domain of RIG-I to Block RNA-Induced Activation.</title>
        <authorList>
            <person name="Zhao J."/>
            <person name="Zeng Y."/>
            <person name="Xu S."/>
            <person name="Chen J."/>
            <person name="Shen G."/>
            <person name="Yu C."/>
            <person name="Knipe D."/>
            <person name="Yuan W."/>
            <person name="Peng J."/>
            <person name="Xu W."/>
            <person name="Zhang C."/>
            <person name="Xia Z."/>
            <person name="Feng P."/>
        </authorList>
    </citation>
    <scope>FUNCTION</scope>
    <scope>INTERACTION WITH HOST RIGI</scope>
    <scope>MUTAGENESIS OF CYS-819 AND CYS-850</scope>
</reference>
<reference key="10">
    <citation type="journal article" date="2017" name="PLoS Pathog.">
        <title>The pUL37 tegument protein guides alpha-herpesvirus retrograde axonal transport to promote neuroinvasion.</title>
        <authorList>
            <person name="Richards A.L."/>
            <person name="Sollars P.J."/>
            <person name="Pitts J.D."/>
            <person name="Stults A.M."/>
            <person name="Heldwein E.E."/>
            <person name="Pickard G.E."/>
            <person name="Smith G.A."/>
        </authorList>
    </citation>
    <scope>FUNCTION</scope>
</reference>
<reference key="11">
    <citation type="journal article" date="2018" name="Cell Host Microbe">
        <title>Species-Specific Deamidation of cGAS by Herpes Simplex Virus UL37 Protein Facilitates Viral Replication.</title>
        <authorList>
            <person name="Zhang J."/>
            <person name="Zhao J."/>
            <person name="Xu S."/>
            <person name="Li J."/>
            <person name="He S."/>
            <person name="Zeng Y."/>
            <person name="Xie L."/>
            <person name="Xie N."/>
            <person name="Liu T."/>
            <person name="Lee K."/>
            <person name="Seo G.J."/>
            <person name="Chen L."/>
            <person name="Stabell A.C."/>
            <person name="Xia Z."/>
            <person name="Sawyer S.L."/>
            <person name="Jung J."/>
            <person name="Huang C."/>
            <person name="Feng P."/>
        </authorList>
    </citation>
    <scope>FUNCTION</scope>
    <scope>INTERACTION WITH HOST CGAS</scope>
    <scope>MUTAGENESIS OF CYS-819</scope>
</reference>
<reference key="12">
    <citation type="journal article" date="2017" name="J. Virol.">
        <title>Crystal Structure of the N-Terminal Half of the Traffic Controller UL37 from Herpes Simplex Virus 1.</title>
        <authorList>
            <person name="Koenigsberg A.L."/>
            <person name="Heldwein E.E."/>
        </authorList>
    </citation>
    <scope>X-RAY CRYSTALLOGRAPHY (3.51 ANGSTROMS) OF 1-575</scope>
</reference>
<proteinExistence type="evidence at protein level"/>
<accession>P10221</accession>
<dbReference type="EC" id="3.5.1.-" evidence="9 11"/>
<dbReference type="EC" id="3.5.1.44" evidence="11"/>
<dbReference type="EMBL" id="X14112">
    <property type="protein sequence ID" value="CAA32312.1"/>
    <property type="molecule type" value="Genomic_DNA"/>
</dbReference>
<dbReference type="PIR" id="A30088">
    <property type="entry name" value="WMBEH7"/>
</dbReference>
<dbReference type="PDB" id="5VYL">
    <property type="method" value="X-ray"/>
    <property type="resolution" value="3.51 A"/>
    <property type="chains" value="A=1-575"/>
</dbReference>
<dbReference type="PDBsum" id="5VYL"/>
<dbReference type="SASBDB" id="P10221"/>
<dbReference type="SMR" id="P10221"/>
<dbReference type="BioGRID" id="971403">
    <property type="interactions" value="9"/>
</dbReference>
<dbReference type="ELM" id="P10221"/>
<dbReference type="IntAct" id="P10221">
    <property type="interactions" value="7"/>
</dbReference>
<dbReference type="MINT" id="P10221"/>
<dbReference type="Proteomes" id="UP000009294">
    <property type="component" value="Segment"/>
</dbReference>
<dbReference type="GO" id="GO:0043657">
    <property type="term" value="C:host cell"/>
    <property type="evidence" value="ECO:0007669"/>
    <property type="project" value="GOC"/>
</dbReference>
<dbReference type="GO" id="GO:0030430">
    <property type="term" value="C:host cell cytoplasm"/>
    <property type="evidence" value="ECO:0000314"/>
    <property type="project" value="UniProt"/>
</dbReference>
<dbReference type="GO" id="GO:0044177">
    <property type="term" value="C:host cell Golgi apparatus"/>
    <property type="evidence" value="ECO:0007669"/>
    <property type="project" value="UniProtKB-SubCell"/>
</dbReference>
<dbReference type="GO" id="GO:0042025">
    <property type="term" value="C:host cell nucleus"/>
    <property type="evidence" value="ECO:0007669"/>
    <property type="project" value="UniProtKB-SubCell"/>
</dbReference>
<dbReference type="GO" id="GO:0019033">
    <property type="term" value="C:viral tegument"/>
    <property type="evidence" value="ECO:0000314"/>
    <property type="project" value="CACAO"/>
</dbReference>
<dbReference type="GO" id="GO:0042802">
    <property type="term" value="F:identical protein binding"/>
    <property type="evidence" value="ECO:0000353"/>
    <property type="project" value="IntAct"/>
</dbReference>
<dbReference type="GO" id="GO:0050568">
    <property type="term" value="F:protein-glutamine glutaminase activity"/>
    <property type="evidence" value="ECO:0000314"/>
    <property type="project" value="UniProt"/>
</dbReference>
<dbReference type="GO" id="GO:0039701">
    <property type="term" value="P:microtubule-dependent intracellular transport of viral material towards cell periphery"/>
    <property type="evidence" value="ECO:0000314"/>
    <property type="project" value="UniProtKB"/>
</dbReference>
<dbReference type="GO" id="GO:0039537">
    <property type="term" value="P:symbiont-mediated suppression of cytoplasmic pattern recognition receptor signaling pathway"/>
    <property type="evidence" value="ECO:0000314"/>
    <property type="project" value="UniProt"/>
</dbReference>
<dbReference type="GO" id="GO:0039540">
    <property type="term" value="P:symbiont-mediated suppression of host cytoplasmic pattern recognition receptor signaling pathway via inhibition of RIG-I activity"/>
    <property type="evidence" value="ECO:0000314"/>
    <property type="project" value="UniProtKB"/>
</dbReference>
<dbReference type="GO" id="GO:0019068">
    <property type="term" value="P:virion assembly"/>
    <property type="evidence" value="ECO:0007669"/>
    <property type="project" value="InterPro"/>
</dbReference>
<dbReference type="HAMAP" id="MF_04043">
    <property type="entry name" value="HSV_ITP"/>
    <property type="match status" value="1"/>
</dbReference>
<dbReference type="InterPro" id="IPR005655">
    <property type="entry name" value="Herpes_UL37"/>
</dbReference>
<dbReference type="InterPro" id="IPR034738">
    <property type="entry name" value="HSV_ITP"/>
</dbReference>
<dbReference type="Pfam" id="PF03970">
    <property type="entry name" value="Herpes_UL37_1"/>
    <property type="match status" value="1"/>
</dbReference>
<organism>
    <name type="scientific">Human herpesvirus 1 (strain 17)</name>
    <name type="common">HHV-1</name>
    <name type="synonym">Human herpes simplex virus 1</name>
    <dbReference type="NCBI Taxonomy" id="10299"/>
    <lineage>
        <taxon>Viruses</taxon>
        <taxon>Duplodnaviria</taxon>
        <taxon>Heunggongvirae</taxon>
        <taxon>Peploviricota</taxon>
        <taxon>Herviviricetes</taxon>
        <taxon>Herpesvirales</taxon>
        <taxon>Orthoherpesviridae</taxon>
        <taxon>Alphaherpesvirinae</taxon>
        <taxon>Simplexvirus</taxon>
        <taxon>Simplexvirus humanalpha1</taxon>
        <taxon>Human herpesvirus 1</taxon>
    </lineage>
</organism>
<name>ITP_HHV11</name>
<protein>
    <recommendedName>
        <fullName evidence="1">Inner tegument protein</fullName>
        <ecNumber evidence="9 11">3.5.1.-</ecNumber>
        <ecNumber evidence="11">3.5.1.44</ecNumber>
    </recommendedName>
    <alternativeName>
        <fullName>Viral deamidase UL37</fullName>
    </alternativeName>
</protein>